<reference key="1">
    <citation type="journal article" date="2001" name="Lancet">
        <title>Whole genome sequencing of meticillin-resistant Staphylococcus aureus.</title>
        <authorList>
            <person name="Kuroda M."/>
            <person name="Ohta T."/>
            <person name="Uchiyama I."/>
            <person name="Baba T."/>
            <person name="Yuzawa H."/>
            <person name="Kobayashi I."/>
            <person name="Cui L."/>
            <person name="Oguchi A."/>
            <person name="Aoki K."/>
            <person name="Nagai Y."/>
            <person name="Lian J.-Q."/>
            <person name="Ito T."/>
            <person name="Kanamori M."/>
            <person name="Matsumaru H."/>
            <person name="Maruyama A."/>
            <person name="Murakami H."/>
            <person name="Hosoyama A."/>
            <person name="Mizutani-Ui Y."/>
            <person name="Takahashi N.K."/>
            <person name="Sawano T."/>
            <person name="Inoue R."/>
            <person name="Kaito C."/>
            <person name="Sekimizu K."/>
            <person name="Hirakawa H."/>
            <person name="Kuhara S."/>
            <person name="Goto S."/>
            <person name="Yabuzaki J."/>
            <person name="Kanehisa M."/>
            <person name="Yamashita A."/>
            <person name="Oshima K."/>
            <person name="Furuya K."/>
            <person name="Yoshino C."/>
            <person name="Shiba T."/>
            <person name="Hattori M."/>
            <person name="Ogasawara N."/>
            <person name="Hayashi H."/>
            <person name="Hiramatsu K."/>
        </authorList>
    </citation>
    <scope>NUCLEOTIDE SEQUENCE [LARGE SCALE GENOMIC DNA]</scope>
    <source>
        <strain>Mu50 / ATCC 700699</strain>
    </source>
</reference>
<comment type="function">
    <text evidence="1">Catalyzes the reversible aldol cleavage of N-acetylneuraminic acid (sialic acid; Neu5Ac) to form pyruvate and N-acetylmannosamine (ManNAc) via a Schiff base intermediate.</text>
</comment>
<comment type="catalytic activity">
    <reaction evidence="1">
        <text>aceneuramate = aldehydo-N-acetyl-D-mannosamine + pyruvate</text>
        <dbReference type="Rhea" id="RHEA:23296"/>
        <dbReference type="ChEBI" id="CHEBI:15361"/>
        <dbReference type="ChEBI" id="CHEBI:17122"/>
        <dbReference type="ChEBI" id="CHEBI:173083"/>
        <dbReference type="EC" id="4.1.3.3"/>
    </reaction>
</comment>
<comment type="pathway">
    <text evidence="1">Amino-sugar metabolism; N-acetylneuraminate degradation; D-fructose 6-phosphate from N-acetylneuraminate: step 1/5.</text>
</comment>
<comment type="subunit">
    <text evidence="1">Homotetramer.</text>
</comment>
<comment type="subcellular location">
    <subcellularLocation>
        <location evidence="1">Cytoplasm</location>
    </subcellularLocation>
</comment>
<comment type="similarity">
    <text evidence="1">Belongs to the DapA family. NanA subfamily.</text>
</comment>
<keyword id="KW-0119">Carbohydrate metabolism</keyword>
<keyword id="KW-0963">Cytoplasm</keyword>
<keyword id="KW-0456">Lyase</keyword>
<keyword id="KW-0704">Schiff base</keyword>
<accession>P63949</accession>
<accession>Q99WR1</accession>
<organism>
    <name type="scientific">Staphylococcus aureus (strain Mu50 / ATCC 700699)</name>
    <dbReference type="NCBI Taxonomy" id="158878"/>
    <lineage>
        <taxon>Bacteria</taxon>
        <taxon>Bacillati</taxon>
        <taxon>Bacillota</taxon>
        <taxon>Bacilli</taxon>
        <taxon>Bacillales</taxon>
        <taxon>Staphylococcaceae</taxon>
        <taxon>Staphylococcus</taxon>
    </lineage>
</organism>
<dbReference type="EC" id="4.1.3.3" evidence="1"/>
<dbReference type="EMBL" id="BA000017">
    <property type="protein sequence ID" value="BAB56477.1"/>
    <property type="molecule type" value="Genomic_DNA"/>
</dbReference>
<dbReference type="RefSeq" id="WP_001030736.1">
    <property type="nucleotide sequence ID" value="NC_002758.2"/>
</dbReference>
<dbReference type="SMR" id="P63949"/>
<dbReference type="KEGG" id="sav:SAV0315"/>
<dbReference type="HOGENOM" id="CLU_049343_5_1_9"/>
<dbReference type="PhylomeDB" id="P63949"/>
<dbReference type="UniPathway" id="UPA00629">
    <property type="reaction ID" value="UER00680"/>
</dbReference>
<dbReference type="Proteomes" id="UP000002481">
    <property type="component" value="Chromosome"/>
</dbReference>
<dbReference type="GO" id="GO:0005829">
    <property type="term" value="C:cytosol"/>
    <property type="evidence" value="ECO:0007669"/>
    <property type="project" value="TreeGrafter"/>
</dbReference>
<dbReference type="GO" id="GO:0008747">
    <property type="term" value="F:N-acetylneuraminate lyase activity"/>
    <property type="evidence" value="ECO:0007669"/>
    <property type="project" value="UniProtKB-UniRule"/>
</dbReference>
<dbReference type="GO" id="GO:0005975">
    <property type="term" value="P:carbohydrate metabolic process"/>
    <property type="evidence" value="ECO:0007669"/>
    <property type="project" value="UniProtKB-UniRule"/>
</dbReference>
<dbReference type="GO" id="GO:0019262">
    <property type="term" value="P:N-acetylneuraminate catabolic process"/>
    <property type="evidence" value="ECO:0007669"/>
    <property type="project" value="UniProtKB-UniRule"/>
</dbReference>
<dbReference type="CDD" id="cd00954">
    <property type="entry name" value="NAL"/>
    <property type="match status" value="1"/>
</dbReference>
<dbReference type="FunFam" id="3.20.20.70:FF:000039">
    <property type="entry name" value="N-acetylneuraminate lyase"/>
    <property type="match status" value="1"/>
</dbReference>
<dbReference type="Gene3D" id="3.20.20.70">
    <property type="entry name" value="Aldolase class I"/>
    <property type="match status" value="1"/>
</dbReference>
<dbReference type="HAMAP" id="MF_01237">
    <property type="entry name" value="N_acetylneuram_lyase"/>
    <property type="match status" value="1"/>
</dbReference>
<dbReference type="InterPro" id="IPR013785">
    <property type="entry name" value="Aldolase_TIM"/>
</dbReference>
<dbReference type="InterPro" id="IPR002220">
    <property type="entry name" value="DapA-like"/>
</dbReference>
<dbReference type="InterPro" id="IPR005264">
    <property type="entry name" value="NanA"/>
</dbReference>
<dbReference type="InterPro" id="IPR020625">
    <property type="entry name" value="Schiff_base-form_aldolases_AS"/>
</dbReference>
<dbReference type="NCBIfam" id="NF003164">
    <property type="entry name" value="PRK04147.1"/>
    <property type="match status" value="1"/>
</dbReference>
<dbReference type="PANTHER" id="PTHR42849">
    <property type="entry name" value="N-ACETYLNEURAMINATE LYASE"/>
    <property type="match status" value="1"/>
</dbReference>
<dbReference type="PANTHER" id="PTHR42849:SF1">
    <property type="entry name" value="N-ACETYLNEURAMINATE LYASE"/>
    <property type="match status" value="1"/>
</dbReference>
<dbReference type="Pfam" id="PF00701">
    <property type="entry name" value="DHDPS"/>
    <property type="match status" value="1"/>
</dbReference>
<dbReference type="PIRSF" id="PIRSF001365">
    <property type="entry name" value="DHDPS"/>
    <property type="match status" value="1"/>
</dbReference>
<dbReference type="PRINTS" id="PR00146">
    <property type="entry name" value="DHPICSNTHASE"/>
</dbReference>
<dbReference type="SMART" id="SM01130">
    <property type="entry name" value="DHDPS"/>
    <property type="match status" value="1"/>
</dbReference>
<dbReference type="SUPFAM" id="SSF51569">
    <property type="entry name" value="Aldolase"/>
    <property type="match status" value="1"/>
</dbReference>
<dbReference type="PROSITE" id="PS00666">
    <property type="entry name" value="DHDPS_2"/>
    <property type="match status" value="1"/>
</dbReference>
<protein>
    <recommendedName>
        <fullName evidence="1">N-acetylneuraminate lyase</fullName>
        <shortName evidence="1">NAL</shortName>
        <shortName evidence="1">Neu5Ac lyase</shortName>
        <ecNumber evidence="1">4.1.3.3</ecNumber>
    </recommendedName>
    <alternativeName>
        <fullName evidence="1">N-acetylneuraminate pyruvate-lyase</fullName>
    </alternativeName>
    <alternativeName>
        <fullName evidence="1">N-acetylneuraminic acid aldolase</fullName>
    </alternativeName>
    <alternativeName>
        <fullName evidence="1">Sialate lyase</fullName>
    </alternativeName>
    <alternativeName>
        <fullName evidence="1">Sialic acid aldolase</fullName>
    </alternativeName>
    <alternativeName>
        <fullName evidence="1">Sialic acid lyase</fullName>
    </alternativeName>
</protein>
<feature type="chain" id="PRO_0000103222" description="N-acetylneuraminate lyase">
    <location>
        <begin position="1"/>
        <end position="293"/>
    </location>
</feature>
<feature type="active site" description="Proton donor" evidence="1">
    <location>
        <position position="137"/>
    </location>
</feature>
<feature type="active site" description="Schiff-base intermediate with substrate" evidence="1">
    <location>
        <position position="165"/>
    </location>
</feature>
<feature type="binding site" evidence="1">
    <location>
        <position position="48"/>
    </location>
    <ligand>
        <name>aceneuramate</name>
        <dbReference type="ChEBI" id="CHEBI:173083"/>
    </ligand>
</feature>
<feature type="binding site" evidence="1">
    <location>
        <position position="49"/>
    </location>
    <ligand>
        <name>aceneuramate</name>
        <dbReference type="ChEBI" id="CHEBI:173083"/>
    </ligand>
</feature>
<feature type="binding site" evidence="1">
    <location>
        <position position="167"/>
    </location>
    <ligand>
        <name>aceneuramate</name>
        <dbReference type="ChEBI" id="CHEBI:173083"/>
    </ligand>
</feature>
<feature type="binding site" evidence="1">
    <location>
        <position position="189"/>
    </location>
    <ligand>
        <name>aceneuramate</name>
        <dbReference type="ChEBI" id="CHEBI:173083"/>
    </ligand>
</feature>
<feature type="binding site" evidence="1">
    <location>
        <position position="191"/>
    </location>
    <ligand>
        <name>aceneuramate</name>
        <dbReference type="ChEBI" id="CHEBI:173083"/>
    </ligand>
</feature>
<feature type="binding site" evidence="1">
    <location>
        <position position="192"/>
    </location>
    <ligand>
        <name>aceneuramate</name>
        <dbReference type="ChEBI" id="CHEBI:173083"/>
    </ligand>
</feature>
<feature type="binding site" evidence="1">
    <location>
        <position position="208"/>
    </location>
    <ligand>
        <name>aceneuramate</name>
        <dbReference type="ChEBI" id="CHEBI:173083"/>
    </ligand>
</feature>
<sequence>MNKDLKGLYAALLVPFDENGQVNEQGLKQIAQNAIETEELDGLYVNGSSGENFLLNTEQKKQVFKVAKEAVGDKVKLIAQVGSLDLNEAIELGKYATELGYDALSAVTPFYYPFTFEEIRDYYFDIIEATQNNMIIYAIPDLTGVNISIEQFSELFNHEKIVGVKYTAPNFFLLERIRKAFPDKLILSGFDEMLVQATISGVDGAIGSTYNVNGRRARKIFDLARQGQIQEAYQLQHDSNDIIETVLSMGIYPTLKEILRHRDIDAGLPKRPFKPFNEAHRQTLDQLIAKYDL</sequence>
<proteinExistence type="inferred from homology"/>
<gene>
    <name evidence="1" type="primary">nanA</name>
    <name type="ordered locus">SAV0315</name>
</gene>
<evidence type="ECO:0000255" key="1">
    <source>
        <dbReference type="HAMAP-Rule" id="MF_01237"/>
    </source>
</evidence>
<name>NANA_STAAM</name>